<comment type="function">
    <text evidence="1">Involved in the binding of tRNA to the ribosomes.</text>
</comment>
<comment type="subunit">
    <text evidence="1">Part of the 30S ribosomal subunit.</text>
</comment>
<comment type="similarity">
    <text evidence="1">Belongs to the universal ribosomal protein uS10 family.</text>
</comment>
<dbReference type="EMBL" id="CP000744">
    <property type="protein sequence ID" value="ABR85595.1"/>
    <property type="molecule type" value="Genomic_DNA"/>
</dbReference>
<dbReference type="RefSeq" id="WP_003103876.1">
    <property type="nucleotide sequence ID" value="NC_009656.1"/>
</dbReference>
<dbReference type="SMR" id="A6UZI7"/>
<dbReference type="GeneID" id="77261717"/>
<dbReference type="KEGG" id="pap:PSPA7_0836"/>
<dbReference type="HOGENOM" id="CLU_122625_1_3_6"/>
<dbReference type="Proteomes" id="UP000001582">
    <property type="component" value="Chromosome"/>
</dbReference>
<dbReference type="GO" id="GO:1990904">
    <property type="term" value="C:ribonucleoprotein complex"/>
    <property type="evidence" value="ECO:0007669"/>
    <property type="project" value="UniProtKB-KW"/>
</dbReference>
<dbReference type="GO" id="GO:0005840">
    <property type="term" value="C:ribosome"/>
    <property type="evidence" value="ECO:0007669"/>
    <property type="project" value="UniProtKB-KW"/>
</dbReference>
<dbReference type="GO" id="GO:0003735">
    <property type="term" value="F:structural constituent of ribosome"/>
    <property type="evidence" value="ECO:0007669"/>
    <property type="project" value="InterPro"/>
</dbReference>
<dbReference type="GO" id="GO:0000049">
    <property type="term" value="F:tRNA binding"/>
    <property type="evidence" value="ECO:0007669"/>
    <property type="project" value="UniProtKB-UniRule"/>
</dbReference>
<dbReference type="GO" id="GO:0006412">
    <property type="term" value="P:translation"/>
    <property type="evidence" value="ECO:0007669"/>
    <property type="project" value="UniProtKB-UniRule"/>
</dbReference>
<dbReference type="FunFam" id="3.30.70.600:FF:000001">
    <property type="entry name" value="30S ribosomal protein S10"/>
    <property type="match status" value="1"/>
</dbReference>
<dbReference type="Gene3D" id="3.30.70.600">
    <property type="entry name" value="Ribosomal protein S10 domain"/>
    <property type="match status" value="1"/>
</dbReference>
<dbReference type="HAMAP" id="MF_00508">
    <property type="entry name" value="Ribosomal_uS10"/>
    <property type="match status" value="1"/>
</dbReference>
<dbReference type="InterPro" id="IPR001848">
    <property type="entry name" value="Ribosomal_uS10"/>
</dbReference>
<dbReference type="InterPro" id="IPR018268">
    <property type="entry name" value="Ribosomal_uS10_CS"/>
</dbReference>
<dbReference type="InterPro" id="IPR027486">
    <property type="entry name" value="Ribosomal_uS10_dom"/>
</dbReference>
<dbReference type="InterPro" id="IPR036838">
    <property type="entry name" value="Ribosomal_uS10_dom_sf"/>
</dbReference>
<dbReference type="NCBIfam" id="NF001861">
    <property type="entry name" value="PRK00596.1"/>
    <property type="match status" value="1"/>
</dbReference>
<dbReference type="NCBIfam" id="TIGR01049">
    <property type="entry name" value="rpsJ_bact"/>
    <property type="match status" value="1"/>
</dbReference>
<dbReference type="PANTHER" id="PTHR11700">
    <property type="entry name" value="30S RIBOSOMAL PROTEIN S10 FAMILY MEMBER"/>
    <property type="match status" value="1"/>
</dbReference>
<dbReference type="Pfam" id="PF00338">
    <property type="entry name" value="Ribosomal_S10"/>
    <property type="match status" value="1"/>
</dbReference>
<dbReference type="PRINTS" id="PR00971">
    <property type="entry name" value="RIBOSOMALS10"/>
</dbReference>
<dbReference type="SMART" id="SM01403">
    <property type="entry name" value="Ribosomal_S10"/>
    <property type="match status" value="1"/>
</dbReference>
<dbReference type="SUPFAM" id="SSF54999">
    <property type="entry name" value="Ribosomal protein S10"/>
    <property type="match status" value="1"/>
</dbReference>
<dbReference type="PROSITE" id="PS00361">
    <property type="entry name" value="RIBOSOMAL_S10"/>
    <property type="match status" value="1"/>
</dbReference>
<keyword id="KW-0687">Ribonucleoprotein</keyword>
<keyword id="KW-0689">Ribosomal protein</keyword>
<evidence type="ECO:0000255" key="1">
    <source>
        <dbReference type="HAMAP-Rule" id="MF_00508"/>
    </source>
</evidence>
<evidence type="ECO:0000305" key="2"/>
<feature type="chain" id="PRO_1000015084" description="Small ribosomal subunit protein uS10">
    <location>
        <begin position="1"/>
        <end position="103"/>
    </location>
</feature>
<name>RS10_PSEP7</name>
<organism>
    <name type="scientific">Pseudomonas paraeruginosa (strain DSM 24068 / PA7)</name>
    <name type="common">Pseudomonas aeruginosa (strain PA7)</name>
    <dbReference type="NCBI Taxonomy" id="381754"/>
    <lineage>
        <taxon>Bacteria</taxon>
        <taxon>Pseudomonadati</taxon>
        <taxon>Pseudomonadota</taxon>
        <taxon>Gammaproteobacteria</taxon>
        <taxon>Pseudomonadales</taxon>
        <taxon>Pseudomonadaceae</taxon>
        <taxon>Pseudomonas</taxon>
        <taxon>Pseudomonas paraeruginosa</taxon>
    </lineage>
</organism>
<reference key="1">
    <citation type="submission" date="2007-06" db="EMBL/GenBank/DDBJ databases">
        <authorList>
            <person name="Dodson R.J."/>
            <person name="Harkins D."/>
            <person name="Paulsen I.T."/>
        </authorList>
    </citation>
    <scope>NUCLEOTIDE SEQUENCE [LARGE SCALE GENOMIC DNA]</scope>
    <source>
        <strain>DSM 24068 / PA7</strain>
    </source>
</reference>
<accession>A6UZI7</accession>
<gene>
    <name evidence="1" type="primary">rpsJ</name>
    <name type="ordered locus">PSPA7_0836</name>
</gene>
<sequence length="103" mass="11767">MQNQQIRIRLKAFDHRLIDQSTQEIVETAKRTGAQVRGPIPLPTRKERFTVLISPHVNKDARDQYEIRTHKRVLDIVQPTDKTVDALMKLDLAAGVEVQISLG</sequence>
<protein>
    <recommendedName>
        <fullName evidence="1">Small ribosomal subunit protein uS10</fullName>
    </recommendedName>
    <alternativeName>
        <fullName evidence="2">30S ribosomal protein S10</fullName>
    </alternativeName>
</protein>
<proteinExistence type="inferred from homology"/>